<dbReference type="EMBL" id="AC002332">
    <property type="status" value="NOT_ANNOTATED_CDS"/>
    <property type="molecule type" value="Genomic_DNA"/>
</dbReference>
<dbReference type="EMBL" id="CP002685">
    <property type="protein sequence ID" value="AEC08828.1"/>
    <property type="molecule type" value="Genomic_DNA"/>
</dbReference>
<dbReference type="RefSeq" id="NP_001189666.1">
    <molecule id="F4IVU1-1"/>
    <property type="nucleotide sequence ID" value="NM_001202737.2"/>
</dbReference>
<dbReference type="SMR" id="F4IVU1"/>
<dbReference type="FunCoup" id="F4IVU1">
    <property type="interactions" value="3273"/>
</dbReference>
<dbReference type="STRING" id="3702.F4IVU1"/>
<dbReference type="PaxDb" id="3702-AT2G33385.2"/>
<dbReference type="EnsemblPlants" id="AT2G33385.2">
    <molecule id="F4IVU1-1"/>
    <property type="protein sequence ID" value="AT2G33385.2"/>
    <property type="gene ID" value="AT2G33385"/>
</dbReference>
<dbReference type="GeneID" id="817902"/>
<dbReference type="Gramene" id="AT2G33385.2">
    <molecule id="F4IVU1-1"/>
    <property type="protein sequence ID" value="AT2G33385.2"/>
    <property type="gene ID" value="AT2G33385"/>
</dbReference>
<dbReference type="KEGG" id="ath:AT2G33385"/>
<dbReference type="Araport" id="AT2G33385"/>
<dbReference type="TAIR" id="AT2G33385">
    <property type="gene designation" value="ARPC2B"/>
</dbReference>
<dbReference type="eggNOG" id="KOG2826">
    <property type="taxonomic scope" value="Eukaryota"/>
</dbReference>
<dbReference type="InParanoid" id="F4IVU1"/>
<dbReference type="PRO" id="PR:F4IVU1"/>
<dbReference type="Proteomes" id="UP000006548">
    <property type="component" value="Chromosome 2"/>
</dbReference>
<dbReference type="ExpressionAtlas" id="F4IVU1">
    <property type="expression patterns" value="baseline and differential"/>
</dbReference>
<dbReference type="GO" id="GO:0005885">
    <property type="term" value="C:Arp2/3 protein complex"/>
    <property type="evidence" value="ECO:0000304"/>
    <property type="project" value="TAIR"/>
</dbReference>
<dbReference type="GO" id="GO:0042995">
    <property type="term" value="C:cell projection"/>
    <property type="evidence" value="ECO:0007669"/>
    <property type="project" value="UniProtKB-SubCell"/>
</dbReference>
<dbReference type="GO" id="GO:0005737">
    <property type="term" value="C:cytoplasm"/>
    <property type="evidence" value="ECO:0007669"/>
    <property type="project" value="UniProtKB-KW"/>
</dbReference>
<dbReference type="GO" id="GO:0003779">
    <property type="term" value="F:actin binding"/>
    <property type="evidence" value="ECO:0007669"/>
    <property type="project" value="UniProtKB-KW"/>
</dbReference>
<dbReference type="GO" id="GO:0007015">
    <property type="term" value="P:actin filament organization"/>
    <property type="evidence" value="ECO:0000304"/>
    <property type="project" value="TAIR"/>
</dbReference>
<dbReference type="GO" id="GO:0030041">
    <property type="term" value="P:actin filament polymerization"/>
    <property type="evidence" value="ECO:0007669"/>
    <property type="project" value="InterPro"/>
</dbReference>
<dbReference type="GO" id="GO:0034314">
    <property type="term" value="P:Arp2/3 complex-mediated actin nucleation"/>
    <property type="evidence" value="ECO:0007669"/>
    <property type="project" value="InterPro"/>
</dbReference>
<dbReference type="FunFam" id="3.30.1460.20:FF:000006">
    <property type="entry name" value="Arp2/3 complex 34 kDa subunit"/>
    <property type="match status" value="1"/>
</dbReference>
<dbReference type="FunFam" id="3.30.1460.20:FF:000008">
    <property type="entry name" value="Arp2/3 complex 34 kDa subunit"/>
    <property type="match status" value="1"/>
</dbReference>
<dbReference type="Gene3D" id="3.30.1460.20">
    <property type="match status" value="2"/>
</dbReference>
<dbReference type="InterPro" id="IPR007188">
    <property type="entry name" value="ARPC2"/>
</dbReference>
<dbReference type="InterPro" id="IPR034666">
    <property type="entry name" value="ARPC2/4"/>
</dbReference>
<dbReference type="PANTHER" id="PTHR12058:SF1">
    <property type="entry name" value="ACTIN-RELATED PROTEIN 2_3 COMPLEX SUBUNIT 2B"/>
    <property type="match status" value="1"/>
</dbReference>
<dbReference type="PANTHER" id="PTHR12058">
    <property type="entry name" value="ARP2/3 COMPLEX 34 KDA SUBUNIT"/>
    <property type="match status" value="1"/>
</dbReference>
<dbReference type="Pfam" id="PF04045">
    <property type="entry name" value="P34-Arc"/>
    <property type="match status" value="1"/>
</dbReference>
<dbReference type="SUPFAM" id="SSF69645">
    <property type="entry name" value="Arp2/3 complex subunits"/>
    <property type="match status" value="2"/>
</dbReference>
<name>ARC2B_ARATH</name>
<protein>
    <recommendedName>
        <fullName>Actin-related protein 2/3 complex subunit 2B</fullName>
    </recommendedName>
    <alternativeName>
        <fullName>Actin-related protein C2B</fullName>
    </alternativeName>
    <alternativeName>
        <fullName>Arp2/3 complex 34 kDa subunit</fullName>
        <shortName>p34-ARC</shortName>
    </alternativeName>
</protein>
<proteinExistence type="evidence at transcript level"/>
<sequence length="374" mass="43171">MAYLERASPTLKETLLKIYRAEKPIEVDQHFHEFGSIEYHIKYSVSDPNIVHVSTSTLLETQGAVTLKEISSYTYEVIKNIGVGVIDIVDPPRLGFQLTLGLNLDNIPRGKEAIKIITRISELQAIILSSQLKEMLRSLNFQDDSRSINNMPIRIVYHPSEPFYVFKQPEKITAVFPMNFKDNSDVVIATSFFQELVEVGSQKDMGKAPQCSWSPIPPLQLRGEPVQDLTTNSGFVSFDITSRHIEGKRLDKTVWNLLNFYACAKYHIKCSRGYIQRRMRKRMETLVKLLNNTSLEEEAAQNENGRCKYVKEFVKVPKGKLMMKQRCKEMTRRVKISKFRIKINGCARFRFNQRWISLPKFSSKPSDKSYTKLD</sequence>
<keyword id="KW-0009">Actin-binding</keyword>
<keyword id="KW-0025">Alternative splicing</keyword>
<keyword id="KW-0966">Cell projection</keyword>
<keyword id="KW-0963">Cytoplasm</keyword>
<keyword id="KW-0206">Cytoskeleton</keyword>
<keyword id="KW-1185">Reference proteome</keyword>
<reference key="1">
    <citation type="journal article" date="1999" name="Nature">
        <title>Sequence and analysis of chromosome 2 of the plant Arabidopsis thaliana.</title>
        <authorList>
            <person name="Lin X."/>
            <person name="Kaul S."/>
            <person name="Rounsley S.D."/>
            <person name="Shea T.P."/>
            <person name="Benito M.-I."/>
            <person name="Town C.D."/>
            <person name="Fujii C.Y."/>
            <person name="Mason T.M."/>
            <person name="Bowman C.L."/>
            <person name="Barnstead M.E."/>
            <person name="Feldblyum T.V."/>
            <person name="Buell C.R."/>
            <person name="Ketchum K.A."/>
            <person name="Lee J.J."/>
            <person name="Ronning C.M."/>
            <person name="Koo H.L."/>
            <person name="Moffat K.S."/>
            <person name="Cronin L.A."/>
            <person name="Shen M."/>
            <person name="Pai G."/>
            <person name="Van Aken S."/>
            <person name="Umayam L."/>
            <person name="Tallon L.J."/>
            <person name="Gill J.E."/>
            <person name="Adams M.D."/>
            <person name="Carrera A.J."/>
            <person name="Creasy T.H."/>
            <person name="Goodman H.M."/>
            <person name="Somerville C.R."/>
            <person name="Copenhaver G.P."/>
            <person name="Preuss D."/>
            <person name="Nierman W.C."/>
            <person name="White O."/>
            <person name="Eisen J.A."/>
            <person name="Salzberg S.L."/>
            <person name="Fraser C.M."/>
            <person name="Venter J.C."/>
        </authorList>
    </citation>
    <scope>NUCLEOTIDE SEQUENCE [LARGE SCALE GENOMIC DNA]</scope>
    <source>
        <strain>cv. Columbia</strain>
    </source>
</reference>
<reference key="2">
    <citation type="journal article" date="2017" name="Plant J.">
        <title>Araport11: a complete reannotation of the Arabidopsis thaliana reference genome.</title>
        <authorList>
            <person name="Cheng C.Y."/>
            <person name="Krishnakumar V."/>
            <person name="Chan A.P."/>
            <person name="Thibaud-Nissen F."/>
            <person name="Schobel S."/>
            <person name="Town C.D."/>
        </authorList>
    </citation>
    <scope>GENOME REANNOTATION</scope>
    <source>
        <strain>cv. Columbia</strain>
    </source>
</reference>
<reference key="3">
    <citation type="journal article" date="2004" name="Plant J.">
        <title>DISTORTED2 encodes an ARPC2 subunit of the putative Arabidopsis ARP2/3 complex.</title>
        <authorList>
            <person name="El-Din El-Assal S."/>
            <person name="Le J."/>
            <person name="Basu D."/>
            <person name="Mallery E.L."/>
            <person name="Szymanski D.B."/>
        </authorList>
    </citation>
    <scope>TISSUE SPECIFICITY</scope>
</reference>
<reference key="4">
    <citation type="journal article" date="2005" name="Curr. Opin. Plant Biol.">
        <title>Breaking the WAVE complex: the point of Arabidopsis trichomes.</title>
        <authorList>
            <person name="Szymanski D.B."/>
        </authorList>
    </citation>
    <scope>REVIEW</scope>
</reference>
<evidence type="ECO:0000250" key="1"/>
<evidence type="ECO:0000269" key="2">
    <source>
    </source>
</evidence>
<evidence type="ECO:0000305" key="3"/>
<feature type="chain" id="PRO_0000422529" description="Actin-related protein 2/3 complex subunit 2B">
    <location>
        <begin position="1"/>
        <end position="374"/>
    </location>
</feature>
<accession>F4IVU1</accession>
<gene>
    <name type="primary">ARPC2B</name>
    <name type="ordered locus">At2g33385</name>
    <name type="ORF">F4P9.42</name>
</gene>
<organism>
    <name type="scientific">Arabidopsis thaliana</name>
    <name type="common">Mouse-ear cress</name>
    <dbReference type="NCBI Taxonomy" id="3702"/>
    <lineage>
        <taxon>Eukaryota</taxon>
        <taxon>Viridiplantae</taxon>
        <taxon>Streptophyta</taxon>
        <taxon>Embryophyta</taxon>
        <taxon>Tracheophyta</taxon>
        <taxon>Spermatophyta</taxon>
        <taxon>Magnoliopsida</taxon>
        <taxon>eudicotyledons</taxon>
        <taxon>Gunneridae</taxon>
        <taxon>Pentapetalae</taxon>
        <taxon>rosids</taxon>
        <taxon>malvids</taxon>
        <taxon>Brassicales</taxon>
        <taxon>Brassicaceae</taxon>
        <taxon>Camelineae</taxon>
        <taxon>Arabidopsis</taxon>
    </lineage>
</organism>
<comment type="function">
    <text evidence="1">Functions as actin-binding component of the Arp2/3 complex which is involved in regulation of actin polymerization and together with an activating nucleation-promoting factor (NPF) mediates the formation of branched actin networks. Seems to contact the mother actin filament (By similarity). Arp2/3 complex plays a critical role in the control of cell morphogenesis via the modulation of cell polarity development (By similarity).</text>
</comment>
<comment type="subunit">
    <text evidence="1">Component of the Arp2/3 complex composed of ARP2, ARP3, ARPC1/p41-ARC, ARPC2/p34-ARC, ARPC3/p21-ARC, ARPC4/p20-ARC and ARPC5/p16-ARC.</text>
</comment>
<comment type="subcellular location">
    <subcellularLocation>
        <location evidence="1">Cytoplasm</location>
        <location evidence="1">Cytoskeleton</location>
    </subcellularLocation>
    <subcellularLocation>
        <location evidence="1">Cell projection</location>
    </subcellularLocation>
</comment>
<comment type="alternative products">
    <event type="alternative splicing"/>
    <isoform>
        <id>F4IVU1-1</id>
        <name>1</name>
        <sequence type="displayed"/>
    </isoform>
    <text>A number of isoforms are produced. According to EST sequences.</text>
</comment>
<comment type="tissue specificity">
    <text evidence="2">Expressed at low levels in all tissues with a relatively highest expression in inflorescences.</text>
</comment>
<comment type="similarity">
    <text evidence="3">Belongs to the ARPC2 family.</text>
</comment>